<sequence length="230" mass="27097">MKKKKALPSFLYLVFIVLLPWGVSFSFNKCLELWIKNWWNTRQSQTLLTAIQEKRVLERFMELEDLFILDEMIKEKPNTHVQNPPIGIRKEIIQLAKIDNEGHLHIILHFSTNIICLAILSGSFFLGKEELVILNSWVQEFFYNLNDSVKAFFILLVTDFFVGFHSTRGWELLIRWVYNDLGWVPNELIFTIFVCSFPVILDTCLKFWVFFCLNRLSPSLVVIYHSISEA</sequence>
<proteinExistence type="inferred from homology"/>
<reference key="1">
    <citation type="journal article" date="2004" name="Gene">
        <title>The complete nucleotide sequence of wild rice (Oryza nivara) chloroplast genome: first genome wide comparative sequence analysis of wild and cultivated rice.</title>
        <authorList>
            <person name="Masood M.S."/>
            <person name="Nishikawa T."/>
            <person name="Fukuoka S."/>
            <person name="Njenga P.K."/>
            <person name="Tsudzuki T."/>
            <person name="Kadowaki K."/>
        </authorList>
    </citation>
    <scope>NUCLEOTIDE SEQUENCE [LARGE SCALE GENOMIC DNA]</scope>
    <source>
        <strain evidence="3">cv. SL10</strain>
    </source>
</reference>
<evidence type="ECO:0000255" key="1">
    <source>
        <dbReference type="HAMAP-Rule" id="MF_01308"/>
    </source>
</evidence>
<evidence type="ECO:0000305" key="2"/>
<evidence type="ECO:0000312" key="3">
    <source>
        <dbReference type="Proteomes" id="UP000006591"/>
    </source>
</evidence>
<organism>
    <name type="scientific">Oryza nivara</name>
    <name type="common">Indian wild rice</name>
    <name type="synonym">Oryza sativa f. spontanea</name>
    <dbReference type="NCBI Taxonomy" id="4536"/>
    <lineage>
        <taxon>Eukaryota</taxon>
        <taxon>Viridiplantae</taxon>
        <taxon>Streptophyta</taxon>
        <taxon>Embryophyta</taxon>
        <taxon>Tracheophyta</taxon>
        <taxon>Spermatophyta</taxon>
        <taxon>Magnoliopsida</taxon>
        <taxon>Liliopsida</taxon>
        <taxon>Poales</taxon>
        <taxon>Poaceae</taxon>
        <taxon>BOP clade</taxon>
        <taxon>Oryzoideae</taxon>
        <taxon>Oryzeae</taxon>
        <taxon>Oryzinae</taxon>
        <taxon>Oryza</taxon>
    </lineage>
</organism>
<geneLocation type="chloroplast"/>
<feature type="chain" id="PRO_0000216652" description="Potassium/proton antiporter CemA">
    <location>
        <begin position="1"/>
        <end position="230"/>
    </location>
</feature>
<feature type="transmembrane region" description="Helical" evidence="1">
    <location>
        <begin position="7"/>
        <end position="27"/>
    </location>
</feature>
<feature type="transmembrane region" description="Helical" evidence="1">
    <location>
        <begin position="106"/>
        <end position="126"/>
    </location>
</feature>
<feature type="transmembrane region" description="Helical" evidence="1">
    <location>
        <begin position="145"/>
        <end position="165"/>
    </location>
</feature>
<feature type="transmembrane region" description="Helical" evidence="1">
    <location>
        <begin position="181"/>
        <end position="201"/>
    </location>
</feature>
<protein>
    <recommendedName>
        <fullName evidence="1">Potassium/proton antiporter CemA</fullName>
    </recommendedName>
    <alternativeName>
        <fullName evidence="1">Chloroplast envelope membrane protein A</fullName>
        <shortName evidence="1">CemA</shortName>
    </alternativeName>
</protein>
<keyword id="KW-0050">Antiport</keyword>
<keyword id="KW-0150">Chloroplast</keyword>
<keyword id="KW-0375">Hydrogen ion transport</keyword>
<keyword id="KW-0406">Ion transport</keyword>
<keyword id="KW-0472">Membrane</keyword>
<keyword id="KW-0934">Plastid</keyword>
<keyword id="KW-1001">Plastid inner membrane</keyword>
<keyword id="KW-0630">Potassium</keyword>
<keyword id="KW-0633">Potassium transport</keyword>
<keyword id="KW-1185">Reference proteome</keyword>
<keyword id="KW-0812">Transmembrane</keyword>
<keyword id="KW-1133">Transmembrane helix</keyword>
<keyword id="KW-0813">Transport</keyword>
<name>CEMA_ORYNI</name>
<dbReference type="EMBL" id="AP006728">
    <property type="protein sequence ID" value="BAD26791.1"/>
    <property type="molecule type" value="Genomic_DNA"/>
</dbReference>
<dbReference type="RefSeq" id="YP_052762.1">
    <property type="nucleotide sequence ID" value="NC_005973.1"/>
</dbReference>
<dbReference type="STRING" id="4536.Q6ENG1"/>
<dbReference type="GeneID" id="2885927"/>
<dbReference type="Proteomes" id="UP000006591">
    <property type="component" value="Chloroplast"/>
</dbReference>
<dbReference type="GO" id="GO:0009706">
    <property type="term" value="C:chloroplast inner membrane"/>
    <property type="evidence" value="ECO:0007669"/>
    <property type="project" value="UniProtKB-SubCell"/>
</dbReference>
<dbReference type="GO" id="GO:0009536">
    <property type="term" value="C:plastid"/>
    <property type="evidence" value="ECO:0000305"/>
    <property type="project" value="Gramene"/>
</dbReference>
<dbReference type="GO" id="GO:0015297">
    <property type="term" value="F:antiporter activity"/>
    <property type="evidence" value="ECO:0007669"/>
    <property type="project" value="UniProtKB-KW"/>
</dbReference>
<dbReference type="GO" id="GO:0015078">
    <property type="term" value="F:proton transmembrane transporter activity"/>
    <property type="evidence" value="ECO:0007669"/>
    <property type="project" value="UniProtKB-UniRule"/>
</dbReference>
<dbReference type="GO" id="GO:0006813">
    <property type="term" value="P:potassium ion transport"/>
    <property type="evidence" value="ECO:0007669"/>
    <property type="project" value="UniProtKB-UniRule"/>
</dbReference>
<dbReference type="HAMAP" id="MF_01308">
    <property type="entry name" value="CemA_PxcA"/>
    <property type="match status" value="1"/>
</dbReference>
<dbReference type="InterPro" id="IPR004282">
    <property type="entry name" value="CemA"/>
</dbReference>
<dbReference type="PANTHER" id="PTHR33650:SF2">
    <property type="entry name" value="CHLOROPLAST ENVELOPE MEMBRANE PROTEIN"/>
    <property type="match status" value="1"/>
</dbReference>
<dbReference type="PANTHER" id="PTHR33650">
    <property type="entry name" value="CHLOROPLAST ENVELOPE MEMBRANE PROTEIN-RELATED"/>
    <property type="match status" value="1"/>
</dbReference>
<dbReference type="Pfam" id="PF03040">
    <property type="entry name" value="CemA"/>
    <property type="match status" value="1"/>
</dbReference>
<comment type="function">
    <text evidence="1">Contributes to K(+)/H(+) antiport activity by supporting proton efflux to control proton extrusion and homeostasis in chloroplasts in a light-dependent manner to modulate photosynthesis. Prevents excessive induction of non-photochemical quenching (NPQ) under continuous-light conditions. Indirectly promotes efficient inorganic carbon uptake into chloroplasts.</text>
</comment>
<comment type="catalytic activity">
    <reaction evidence="1">
        <text>K(+)(in) + H(+)(out) = K(+)(out) + H(+)(in)</text>
        <dbReference type="Rhea" id="RHEA:29467"/>
        <dbReference type="ChEBI" id="CHEBI:15378"/>
        <dbReference type="ChEBI" id="CHEBI:29103"/>
    </reaction>
</comment>
<comment type="subcellular location">
    <subcellularLocation>
        <location evidence="1">Plastid</location>
        <location evidence="1">Chloroplast inner membrane</location>
        <topology evidence="1">Multi-pass membrane protein</topology>
    </subcellularLocation>
</comment>
<comment type="similarity">
    <text evidence="1 2">Belongs to the CemA family.</text>
</comment>
<accession>Q6ENG1</accession>
<gene>
    <name evidence="1" type="primary">cemA</name>
    <name type="synonym">ycf10</name>
</gene>